<reference evidence="5" key="1">
    <citation type="journal article" date="2009" name="BMC Evol. Biol.">
        <title>A proteomic approach for studying insect phylogeny: CAPA peptides of ancient insect taxa (Dictyoptera, Blattoptera) as a test case.</title>
        <authorList>
            <person name="Roth S."/>
            <person name="Fromm B."/>
            <person name="Gaede G."/>
            <person name="Predel R."/>
        </authorList>
    </citation>
    <scope>PROTEIN SEQUENCE</scope>
    <scope>AMIDATION AT PHE-11</scope>
    <source>
        <tissue evidence="3">Corpora cardiaca</tissue>
    </source>
</reference>
<comment type="function">
    <text evidence="1">Myotropic peptide.</text>
</comment>
<comment type="subcellular location">
    <subcellularLocation>
        <location evidence="5">Secreted</location>
    </subcellularLocation>
</comment>
<comment type="similarity">
    <text evidence="2">Belongs to the gastrin/cholecystokinin family.</text>
</comment>
<proteinExistence type="evidence at protein level"/>
<keyword id="KW-0027">Amidation</keyword>
<keyword id="KW-0903">Direct protein sequencing</keyword>
<keyword id="KW-0372">Hormone</keyword>
<keyword id="KW-0527">Neuropeptide</keyword>
<keyword id="KW-0964">Secreted</keyword>
<keyword id="KW-0765">Sulfation</keyword>
<organism>
    <name type="scientific">Polyphaga aegyptiaca</name>
    <name type="common">Egyptian desert roach</name>
    <dbReference type="NCBI Taxonomy" id="7085"/>
    <lineage>
        <taxon>Eukaryota</taxon>
        <taxon>Metazoa</taxon>
        <taxon>Ecdysozoa</taxon>
        <taxon>Arthropoda</taxon>
        <taxon>Hexapoda</taxon>
        <taxon>Insecta</taxon>
        <taxon>Pterygota</taxon>
        <taxon>Neoptera</taxon>
        <taxon>Polyneoptera</taxon>
        <taxon>Dictyoptera</taxon>
        <taxon>Blattodea</taxon>
        <taxon>Corydioidea</taxon>
        <taxon>Corydiidae</taxon>
        <taxon>Polyphaga</taxon>
    </lineage>
</organism>
<dbReference type="GO" id="GO:0005576">
    <property type="term" value="C:extracellular region"/>
    <property type="evidence" value="ECO:0007669"/>
    <property type="project" value="UniProtKB-SubCell"/>
</dbReference>
<dbReference type="GO" id="GO:0005179">
    <property type="term" value="F:hormone activity"/>
    <property type="evidence" value="ECO:0007669"/>
    <property type="project" value="UniProtKB-KW"/>
</dbReference>
<dbReference type="GO" id="GO:0007218">
    <property type="term" value="P:neuropeptide signaling pathway"/>
    <property type="evidence" value="ECO:0007669"/>
    <property type="project" value="UniProtKB-KW"/>
</dbReference>
<dbReference type="InterPro" id="IPR013152">
    <property type="entry name" value="Gastrin/cholecystokinin_CS"/>
</dbReference>
<dbReference type="InterPro" id="IPR013259">
    <property type="entry name" value="Sulfakinin"/>
</dbReference>
<dbReference type="Pfam" id="PF08257">
    <property type="entry name" value="Sulfakinin"/>
    <property type="match status" value="1"/>
</dbReference>
<dbReference type="PROSITE" id="PS00259">
    <property type="entry name" value="GASTRIN"/>
    <property type="match status" value="1"/>
</dbReference>
<accession>P85743</accession>
<name>SK1_POLAY</name>
<evidence type="ECO:0000250" key="1">
    <source>
        <dbReference type="UniProtKB" id="P41493"/>
    </source>
</evidence>
<evidence type="ECO:0000255" key="2"/>
<evidence type="ECO:0000269" key="3">
    <source>
    </source>
</evidence>
<evidence type="ECO:0000303" key="4">
    <source>
    </source>
</evidence>
<evidence type="ECO:0000305" key="5"/>
<feature type="peptide" id="PRO_0000378894" description="Sulfakinin-1" evidence="3">
    <location>
        <begin position="1"/>
        <end position="11"/>
    </location>
</feature>
<feature type="modified residue" description="Sulfotyrosine" evidence="1">
    <location>
        <position position="6"/>
    </location>
</feature>
<feature type="modified residue" description="Phenylalanine amide" evidence="3">
    <location>
        <position position="11"/>
    </location>
</feature>
<protein>
    <recommendedName>
        <fullName evidence="4">Sulfakinin-1</fullName>
        <shortName evidence="4">PolAe-SK-1</shortName>
    </recommendedName>
</protein>
<sequence length="11" mass="1445">EQFDDYGHMRF</sequence>